<keyword id="KW-0067">ATP-binding</keyword>
<keyword id="KW-0378">Hydrolase</keyword>
<keyword id="KW-0547">Nucleotide-binding</keyword>
<sequence>MACIDLNADLGEGFGVWRLGDDEAMLRIVTSANVACGFHAGDPAGLLRVCRLAAERGVRIGAQVSYRDLVGFGRRFIDVTADDLLADVVYQIGALQAIAQTAGSAVSYVKPHGALYNTIVTNREQGAAVAAAIQLVDSTLPVLGLAGSTFFDEAARIGLRTVAEAFADRTYRPDGQLISRREPGAVLHDPAVIAQRVVTMVTTGKATAVDGTQLAVTVESICLHGDSPNAIQMATAVRDQLNAAGIDIRAFC</sequence>
<evidence type="ECO:0000255" key="1">
    <source>
        <dbReference type="HAMAP-Rule" id="MF_00691"/>
    </source>
</evidence>
<accession>B8ZUB2</accession>
<organism>
    <name type="scientific">Mycobacterium leprae (strain Br4923)</name>
    <dbReference type="NCBI Taxonomy" id="561304"/>
    <lineage>
        <taxon>Bacteria</taxon>
        <taxon>Bacillati</taxon>
        <taxon>Actinomycetota</taxon>
        <taxon>Actinomycetes</taxon>
        <taxon>Mycobacteriales</taxon>
        <taxon>Mycobacteriaceae</taxon>
        <taxon>Mycobacterium</taxon>
    </lineage>
</organism>
<comment type="function">
    <text evidence="1">Catalyzes the cleavage of 5-oxoproline to form L-glutamate coupled to the hydrolysis of ATP to ADP and inorganic phosphate.</text>
</comment>
<comment type="catalytic activity">
    <reaction evidence="1">
        <text>5-oxo-L-proline + ATP + 2 H2O = L-glutamate + ADP + phosphate + H(+)</text>
        <dbReference type="Rhea" id="RHEA:10348"/>
        <dbReference type="ChEBI" id="CHEBI:15377"/>
        <dbReference type="ChEBI" id="CHEBI:15378"/>
        <dbReference type="ChEBI" id="CHEBI:29985"/>
        <dbReference type="ChEBI" id="CHEBI:30616"/>
        <dbReference type="ChEBI" id="CHEBI:43474"/>
        <dbReference type="ChEBI" id="CHEBI:58402"/>
        <dbReference type="ChEBI" id="CHEBI:456216"/>
        <dbReference type="EC" id="3.5.2.9"/>
    </reaction>
</comment>
<comment type="subunit">
    <text evidence="1">Forms a complex composed of PxpA, PxpB and PxpC.</text>
</comment>
<comment type="similarity">
    <text evidence="1">Belongs to the LamB/PxpA family.</text>
</comment>
<reference key="1">
    <citation type="journal article" date="2009" name="Nat. Genet.">
        <title>Comparative genomic and phylogeographic analysis of Mycobacterium leprae.</title>
        <authorList>
            <person name="Monot M."/>
            <person name="Honore N."/>
            <person name="Garnier T."/>
            <person name="Zidane N."/>
            <person name="Sherafi D."/>
            <person name="Paniz-Mondolfi A."/>
            <person name="Matsuoka M."/>
            <person name="Taylor G.M."/>
            <person name="Donoghue H.D."/>
            <person name="Bouwman A."/>
            <person name="Mays S."/>
            <person name="Watson C."/>
            <person name="Lockwood D."/>
            <person name="Khamispour A."/>
            <person name="Dowlati Y."/>
            <person name="Jianping S."/>
            <person name="Rea T.H."/>
            <person name="Vera-Cabrera L."/>
            <person name="Stefani M.M."/>
            <person name="Banu S."/>
            <person name="Macdonald M."/>
            <person name="Sapkota B.R."/>
            <person name="Spencer J.S."/>
            <person name="Thomas J."/>
            <person name="Harshman K."/>
            <person name="Singh P."/>
            <person name="Busso P."/>
            <person name="Gattiker A."/>
            <person name="Rougemont J."/>
            <person name="Brennan P.J."/>
            <person name="Cole S.T."/>
        </authorList>
    </citation>
    <scope>NUCLEOTIDE SEQUENCE [LARGE SCALE GENOMIC DNA]</scope>
    <source>
        <strain>Br4923</strain>
    </source>
</reference>
<dbReference type="EC" id="3.5.2.9" evidence="1"/>
<dbReference type="EMBL" id="FM211192">
    <property type="protein sequence ID" value="CAR70426.1"/>
    <property type="molecule type" value="Genomic_DNA"/>
</dbReference>
<dbReference type="SMR" id="B8ZUB2"/>
<dbReference type="KEGG" id="mlb:MLBr00333"/>
<dbReference type="HOGENOM" id="CLU_069535_0_0_11"/>
<dbReference type="Proteomes" id="UP000006900">
    <property type="component" value="Chromosome"/>
</dbReference>
<dbReference type="GO" id="GO:0017168">
    <property type="term" value="F:5-oxoprolinase (ATP-hydrolyzing) activity"/>
    <property type="evidence" value="ECO:0007669"/>
    <property type="project" value="UniProtKB-UniRule"/>
</dbReference>
<dbReference type="GO" id="GO:0005524">
    <property type="term" value="F:ATP binding"/>
    <property type="evidence" value="ECO:0007669"/>
    <property type="project" value="UniProtKB-UniRule"/>
</dbReference>
<dbReference type="GO" id="GO:0005975">
    <property type="term" value="P:carbohydrate metabolic process"/>
    <property type="evidence" value="ECO:0007669"/>
    <property type="project" value="InterPro"/>
</dbReference>
<dbReference type="CDD" id="cd10787">
    <property type="entry name" value="LamB_YcsF_like"/>
    <property type="match status" value="1"/>
</dbReference>
<dbReference type="Gene3D" id="3.20.20.370">
    <property type="entry name" value="Glycoside hydrolase/deacetylase"/>
    <property type="match status" value="1"/>
</dbReference>
<dbReference type="HAMAP" id="MF_00691">
    <property type="entry name" value="PxpA"/>
    <property type="match status" value="1"/>
</dbReference>
<dbReference type="InterPro" id="IPR011330">
    <property type="entry name" value="Glyco_hydro/deAcase_b/a-brl"/>
</dbReference>
<dbReference type="InterPro" id="IPR005501">
    <property type="entry name" value="LamB/YcsF/PxpA-like"/>
</dbReference>
<dbReference type="NCBIfam" id="NF003814">
    <property type="entry name" value="PRK05406.1-3"/>
    <property type="match status" value="1"/>
</dbReference>
<dbReference type="NCBIfam" id="NF003816">
    <property type="entry name" value="PRK05406.1-5"/>
    <property type="match status" value="1"/>
</dbReference>
<dbReference type="PANTHER" id="PTHR30292:SF0">
    <property type="entry name" value="5-OXOPROLINASE SUBUNIT A"/>
    <property type="match status" value="1"/>
</dbReference>
<dbReference type="PANTHER" id="PTHR30292">
    <property type="entry name" value="UNCHARACTERIZED PROTEIN YBGL-RELATED"/>
    <property type="match status" value="1"/>
</dbReference>
<dbReference type="Pfam" id="PF03746">
    <property type="entry name" value="LamB_YcsF"/>
    <property type="match status" value="1"/>
</dbReference>
<dbReference type="SUPFAM" id="SSF88713">
    <property type="entry name" value="Glycoside hydrolase/deacetylase"/>
    <property type="match status" value="1"/>
</dbReference>
<protein>
    <recommendedName>
        <fullName evidence="1">5-oxoprolinase subunit A</fullName>
        <shortName evidence="1">5-OPase subunit A</shortName>
        <ecNumber evidence="1">3.5.2.9</ecNumber>
    </recommendedName>
    <alternativeName>
        <fullName evidence="1">5-oxoprolinase (ATP-hydrolyzing) subunit A</fullName>
    </alternativeName>
</protein>
<proteinExistence type="inferred from homology"/>
<gene>
    <name evidence="1" type="primary">pxpA</name>
    <name type="ordered locus">MLBr00333</name>
</gene>
<name>PXPA_MYCLB</name>
<feature type="chain" id="PRO_1000200462" description="5-oxoprolinase subunit A">
    <location>
        <begin position="1"/>
        <end position="252"/>
    </location>
</feature>